<gene>
    <name type="ordered locus">ACICU_01718</name>
</gene>
<accession>B2I0A5</accession>
<keyword id="KW-0963">Cytoplasm</keyword>
<keyword id="KW-0238">DNA-binding</keyword>
<name>Y1718_ACIBC</name>
<evidence type="ECO:0000255" key="1">
    <source>
        <dbReference type="HAMAP-Rule" id="MF_00274"/>
    </source>
</evidence>
<dbReference type="EMBL" id="CP000863">
    <property type="protein sequence ID" value="ACC57030.1"/>
    <property type="molecule type" value="Genomic_DNA"/>
</dbReference>
<dbReference type="RefSeq" id="WP_001024697.1">
    <property type="nucleotide sequence ID" value="NZ_CP031380.1"/>
</dbReference>
<dbReference type="SMR" id="B2I0A5"/>
<dbReference type="KEGG" id="abc:ACICU_01718"/>
<dbReference type="HOGENOM" id="CLU_140930_0_0_6"/>
<dbReference type="Proteomes" id="UP000008839">
    <property type="component" value="Chromosome"/>
</dbReference>
<dbReference type="GO" id="GO:0043590">
    <property type="term" value="C:bacterial nucleoid"/>
    <property type="evidence" value="ECO:0007669"/>
    <property type="project" value="UniProtKB-UniRule"/>
</dbReference>
<dbReference type="GO" id="GO:0005829">
    <property type="term" value="C:cytosol"/>
    <property type="evidence" value="ECO:0007669"/>
    <property type="project" value="TreeGrafter"/>
</dbReference>
<dbReference type="GO" id="GO:0003677">
    <property type="term" value="F:DNA binding"/>
    <property type="evidence" value="ECO:0007669"/>
    <property type="project" value="UniProtKB-UniRule"/>
</dbReference>
<dbReference type="Gene3D" id="3.30.1310.10">
    <property type="entry name" value="Nucleoid-associated protein YbaB-like domain"/>
    <property type="match status" value="1"/>
</dbReference>
<dbReference type="HAMAP" id="MF_00274">
    <property type="entry name" value="DNA_YbaB_EbfC"/>
    <property type="match status" value="1"/>
</dbReference>
<dbReference type="InterPro" id="IPR036894">
    <property type="entry name" value="YbaB-like_sf"/>
</dbReference>
<dbReference type="InterPro" id="IPR004401">
    <property type="entry name" value="YbaB/EbfC"/>
</dbReference>
<dbReference type="NCBIfam" id="TIGR00103">
    <property type="entry name" value="DNA_YbaB_EbfC"/>
    <property type="match status" value="1"/>
</dbReference>
<dbReference type="PANTHER" id="PTHR33449">
    <property type="entry name" value="NUCLEOID-ASSOCIATED PROTEIN YBAB"/>
    <property type="match status" value="1"/>
</dbReference>
<dbReference type="PANTHER" id="PTHR33449:SF1">
    <property type="entry name" value="NUCLEOID-ASSOCIATED PROTEIN YBAB"/>
    <property type="match status" value="1"/>
</dbReference>
<dbReference type="Pfam" id="PF02575">
    <property type="entry name" value="YbaB_DNA_bd"/>
    <property type="match status" value="1"/>
</dbReference>
<dbReference type="PIRSF" id="PIRSF004555">
    <property type="entry name" value="UCP004555"/>
    <property type="match status" value="1"/>
</dbReference>
<dbReference type="SUPFAM" id="SSF82607">
    <property type="entry name" value="YbaB-like"/>
    <property type="match status" value="1"/>
</dbReference>
<comment type="function">
    <text evidence="1">Binds to DNA and alters its conformation. May be involved in regulation of gene expression, nucleoid organization and DNA protection.</text>
</comment>
<comment type="subunit">
    <text evidence="1">Homodimer.</text>
</comment>
<comment type="subcellular location">
    <subcellularLocation>
        <location evidence="1">Cytoplasm</location>
        <location evidence="1">Nucleoid</location>
    </subcellularLocation>
</comment>
<comment type="similarity">
    <text evidence="1">Belongs to the YbaB/EbfC family.</text>
</comment>
<feature type="chain" id="PRO_1000114571" description="Nucleoid-associated protein ACICU_01718">
    <location>
        <begin position="1"/>
        <end position="109"/>
    </location>
</feature>
<reference key="1">
    <citation type="journal article" date="2008" name="Antimicrob. Agents Chemother.">
        <title>Whole-genome pyrosequencing of an epidemic multidrug-resistant Acinetobacter baumannii strain belonging to the European clone II group.</title>
        <authorList>
            <person name="Iacono M."/>
            <person name="Villa L."/>
            <person name="Fortini D."/>
            <person name="Bordoni R."/>
            <person name="Imperi F."/>
            <person name="Bonnal R.J."/>
            <person name="Sicheritz-Ponten T."/>
            <person name="De Bellis G."/>
            <person name="Visca P."/>
            <person name="Cassone A."/>
            <person name="Carattoli A."/>
        </authorList>
    </citation>
    <scope>NUCLEOTIDE SEQUENCE [LARGE SCALE GENOMIC DNA]</scope>
    <source>
        <strain>ACICU</strain>
    </source>
</reference>
<proteinExistence type="inferred from homology"/>
<organism>
    <name type="scientific">Acinetobacter baumannii (strain ACICU)</name>
    <dbReference type="NCBI Taxonomy" id="405416"/>
    <lineage>
        <taxon>Bacteria</taxon>
        <taxon>Pseudomonadati</taxon>
        <taxon>Pseudomonadota</taxon>
        <taxon>Gammaproteobacteria</taxon>
        <taxon>Moraxellales</taxon>
        <taxon>Moraxellaceae</taxon>
        <taxon>Acinetobacter</taxon>
        <taxon>Acinetobacter calcoaceticus/baumannii complex</taxon>
    </lineage>
</organism>
<sequence length="109" mass="12015">MNINMLMQQAQRMQKDMESNIKKAKEELAQTEVHAEAGGGLVKVTMTGRYIVKRIEINPELLQDEPDMIEDLIAAAVNDAVRQAEVVSEEKMQKANSGMGLPPGLAGMF</sequence>
<protein>
    <recommendedName>
        <fullName evidence="1">Nucleoid-associated protein ACICU_01718</fullName>
    </recommendedName>
</protein>